<accession>A8CL69</accession>
<protein>
    <recommendedName>
        <fullName>PBAN-type neuropeptides</fullName>
    </recommendedName>
    <alternativeName>
        <fullName>Pheromone/pyrokinin biosynthesis-activating neuropeptide</fullName>
    </alternativeName>
    <component>
        <recommendedName>
            <fullName>TSQDITSGMWFGPRL-amide</fullName>
        </recommendedName>
        <alternativeName>
            <fullName>Pyrokinin-1</fullName>
        </alternativeName>
    </component>
    <component>
        <recommendedName>
            <fullName>QITQFTPRL-amide</fullName>
        </recommendedName>
        <alternativeName>
            <fullName>Pyrokinin-2</fullName>
        </alternativeName>
    </component>
    <component>
        <recommendedName>
            <fullName>IYLPLFASRL-amide</fullName>
        </recommendedName>
    </component>
    <component>
        <recommendedName>
            <fullName>VPWTPSPRL-amide</fullName>
        </recommendedName>
    </component>
</protein>
<proteinExistence type="evidence at protein level"/>
<reference evidence="6" key="1">
    <citation type="submission" date="2005-09" db="EMBL/GenBank/DDBJ databases">
        <title>Molecular cloning of the pyrokinin preprohormone from Apis mellifera.</title>
        <authorList>
            <person name="Sonne A.T."/>
            <person name="Grimmelikhuijzen C.J.P."/>
        </authorList>
    </citation>
    <scope>NUCLEOTIDE SEQUENCE [MRNA]</scope>
</reference>
<reference evidence="5" key="2">
    <citation type="journal article" date="2006" name="Science">
        <title>From the genome to the proteome: uncovering peptides in the Apis brain.</title>
        <authorList>
            <person name="Hummon A.B."/>
            <person name="Richmond T.A."/>
            <person name="Verleyen P."/>
            <person name="Baggerman G."/>
            <person name="Huybrechts J."/>
            <person name="Ewing M.A."/>
            <person name="Vierstraete E."/>
            <person name="Rodriguez-Zas S.L."/>
            <person name="Schoofs L."/>
            <person name="Robinson G.E."/>
            <person name="Sweedler J.V."/>
        </authorList>
    </citation>
    <scope>PROTEIN SEQUENCE OF 66-80; 120-128; 154-163 AND 167-175</scope>
    <scope>SUBCELLULAR LOCATION</scope>
    <scope>AMIDATION AT LEU-80; LEU-128; LEU-163 AND LEU-175</scope>
    <scope>PYROGLUTAMATE FORMATION AT GLN-120</scope>
    <scope>MASS SPECTROMETRY</scope>
    <source>
        <tissue evidence="3">Brain</tissue>
    </source>
</reference>
<gene>
    <name evidence="4" type="primary">PBAN</name>
</gene>
<organism>
    <name type="scientific">Apis mellifera</name>
    <name type="common">Honeybee</name>
    <dbReference type="NCBI Taxonomy" id="7460"/>
    <lineage>
        <taxon>Eukaryota</taxon>
        <taxon>Metazoa</taxon>
        <taxon>Ecdysozoa</taxon>
        <taxon>Arthropoda</taxon>
        <taxon>Hexapoda</taxon>
        <taxon>Insecta</taxon>
        <taxon>Pterygota</taxon>
        <taxon>Neoptera</taxon>
        <taxon>Endopterygota</taxon>
        <taxon>Hymenoptera</taxon>
        <taxon>Apocrita</taxon>
        <taxon>Aculeata</taxon>
        <taxon>Apoidea</taxon>
        <taxon>Anthophila</taxon>
        <taxon>Apidae</taxon>
        <taxon>Apis</taxon>
    </lineage>
</organism>
<feature type="signal peptide" evidence="3">
    <location>
        <begin position="1"/>
        <end position="33"/>
    </location>
</feature>
<feature type="propeptide" id="PRO_0000339265" evidence="3">
    <location>
        <begin position="34"/>
        <end position="63"/>
    </location>
</feature>
<feature type="peptide" id="PRO_0000339266" description="TSQDITSGMWFGPRL-amide" evidence="3">
    <location>
        <begin position="66"/>
        <end position="80"/>
    </location>
</feature>
<feature type="propeptide" id="PRO_0000339267" evidence="3">
    <location>
        <begin position="86"/>
        <end position="117"/>
    </location>
</feature>
<feature type="peptide" id="PRO_0000339268" description="QITQFTPRL-amide" evidence="3">
    <location>
        <begin position="120"/>
        <end position="128"/>
    </location>
</feature>
<feature type="propeptide" id="PRO_0000339269" evidence="3">
    <location>
        <begin position="131"/>
        <end position="153"/>
    </location>
</feature>
<feature type="peptide" id="PRO_0000339270" description="IYLPLFASRL-amide" evidence="3">
    <location>
        <begin position="154"/>
        <end position="163"/>
    </location>
</feature>
<feature type="peptide" id="PRO_0000339271" description="VPWTPSPRL-amide" evidence="3">
    <location>
        <begin position="167"/>
        <end position="175"/>
    </location>
</feature>
<feature type="propeptide" id="PRO_0000339272" evidence="3">
    <location>
        <begin position="178"/>
        <end position="195"/>
    </location>
</feature>
<feature type="modified residue" description="Leucine amide" evidence="3">
    <location>
        <position position="80"/>
    </location>
</feature>
<feature type="modified residue" description="Pyrrolidone carboxylic acid" evidence="3">
    <location>
        <position position="120"/>
    </location>
</feature>
<feature type="modified residue" description="Leucine amide" evidence="3">
    <location>
        <position position="128"/>
    </location>
</feature>
<feature type="modified residue" description="Leucine amide" evidence="3">
    <location>
        <position position="163"/>
    </location>
</feature>
<feature type="modified residue" description="Leucine amide" evidence="3">
    <location>
        <position position="175"/>
    </location>
</feature>
<evidence type="ECO:0000250" key="1">
    <source>
        <dbReference type="UniProtKB" id="P09971"/>
    </source>
</evidence>
<evidence type="ECO:0000255" key="2"/>
<evidence type="ECO:0000269" key="3">
    <source>
    </source>
</evidence>
<evidence type="ECO:0000303" key="4">
    <source>
    </source>
</evidence>
<evidence type="ECO:0000305" key="5"/>
<evidence type="ECO:0000312" key="6">
    <source>
        <dbReference type="EMBL" id="ABB05501.1"/>
    </source>
</evidence>
<comment type="function">
    <text evidence="1 3">A hormone that controls sex pheromone production in females and pheromone responsiveness in male. Also mediates visceral muscle contractile activity (myotropic activity) (By similarity).</text>
</comment>
<comment type="subcellular location">
    <subcellularLocation>
        <location evidence="3">Secreted</location>
    </subcellularLocation>
</comment>
<comment type="mass spectrometry">
    <molecule>TSQDITSGMWFGPRL-amide</molecule>
</comment>
<comment type="mass spectrometry">
    <molecule>QITQFTPRL-amide</molecule>
</comment>
<comment type="mass spectrometry">
    <molecule>QITQFTPRL-amide</molecule>
    <text>Lacking the pyrrolidone carboxylic acid modification.</text>
</comment>
<comment type="mass spectrometry">
    <molecule>IYLPLFASRL-amide</molecule>
</comment>
<comment type="mass spectrometry">
    <molecule>VPWTPSPRL-amide</molecule>
</comment>
<comment type="similarity">
    <text evidence="2">Belongs to the pyrokinin family.</text>
</comment>
<name>PBAN_APIME</name>
<keyword id="KW-0027">Amidation</keyword>
<keyword id="KW-0165">Cleavage on pair of basic residues</keyword>
<keyword id="KW-0903">Direct protein sequencing</keyword>
<keyword id="KW-0372">Hormone</keyword>
<keyword id="KW-0527">Neuropeptide</keyword>
<keyword id="KW-0873">Pyrrolidone carboxylic acid</keyword>
<keyword id="KW-1185">Reference proteome</keyword>
<keyword id="KW-0964">Secreted</keyword>
<keyword id="KW-0732">Signal</keyword>
<sequence>MIGFAVFSSFNRFTTIFVCVLLCVVYLLSYASGEYDGRDSSSGSNNDRAPSNEFGSCTDGKCIKRTSQDITSGMWFGPRLGRRRRADRKPEINSDIEAFANAFEEPHWAIVTIPETEKRQITQFTPRLGRESGEDYFSYGFPKDQEELYTEEQIYLPLFASRLGRRVPWTPSPRLGRQLHNIVDKPRQNFNDPRF</sequence>
<dbReference type="EMBL" id="DQ199622">
    <property type="protein sequence ID" value="ABB05501.1"/>
    <property type="molecule type" value="mRNA"/>
</dbReference>
<dbReference type="RefSeq" id="NP_001104182.1">
    <property type="nucleotide sequence ID" value="NM_001110712.2"/>
</dbReference>
<dbReference type="STRING" id="7460.A8CL69"/>
<dbReference type="PaxDb" id="7460-GB46057-PA"/>
<dbReference type="EnsemblMetazoa" id="NM_001110712">
    <property type="protein sequence ID" value="NP_001104182"/>
    <property type="gene ID" value="GeneID_100126690"/>
</dbReference>
<dbReference type="GeneID" id="100126690"/>
<dbReference type="KEGG" id="ame:100126690"/>
<dbReference type="CTD" id="692749"/>
<dbReference type="eggNOG" id="ENOG502SEUG">
    <property type="taxonomic scope" value="Eukaryota"/>
</dbReference>
<dbReference type="HOGENOM" id="CLU_120628_0_0_1"/>
<dbReference type="InParanoid" id="A8CL69"/>
<dbReference type="OMA" id="RQPTQFT"/>
<dbReference type="OrthoDB" id="6424205at2759"/>
<dbReference type="PhylomeDB" id="A8CL69"/>
<dbReference type="Proteomes" id="UP000005203">
    <property type="component" value="Linkage group LG6"/>
</dbReference>
<dbReference type="GO" id="GO:0005615">
    <property type="term" value="C:extracellular space"/>
    <property type="evidence" value="ECO:0000314"/>
    <property type="project" value="UniProtKB"/>
</dbReference>
<dbReference type="GO" id="GO:0016084">
    <property type="term" value="F:myostimulatory hormone activity"/>
    <property type="evidence" value="ECO:0000250"/>
    <property type="project" value="UniProtKB"/>
</dbReference>
<dbReference type="GO" id="GO:0005184">
    <property type="term" value="F:neuropeptide hormone activity"/>
    <property type="evidence" value="ECO:0000250"/>
    <property type="project" value="UniProtKB"/>
</dbReference>
<dbReference type="GO" id="GO:0007218">
    <property type="term" value="P:neuropeptide signaling pathway"/>
    <property type="evidence" value="ECO:0000250"/>
    <property type="project" value="UniProtKB"/>
</dbReference>
<dbReference type="InterPro" id="IPR001484">
    <property type="entry name" value="Pyrokinin_CS"/>
</dbReference>
<dbReference type="PROSITE" id="PS00539">
    <property type="entry name" value="PYROKININ"/>
    <property type="match status" value="2"/>
</dbReference>